<gene>
    <name evidence="1" type="primary">rpmD</name>
    <name type="ordered locus">EcolC_0411</name>
</gene>
<evidence type="ECO:0000255" key="1">
    <source>
        <dbReference type="HAMAP-Rule" id="MF_01371"/>
    </source>
</evidence>
<evidence type="ECO:0000305" key="2"/>
<proteinExistence type="inferred from homology"/>
<reference key="1">
    <citation type="submission" date="2008-02" db="EMBL/GenBank/DDBJ databases">
        <title>Complete sequence of Escherichia coli C str. ATCC 8739.</title>
        <authorList>
            <person name="Copeland A."/>
            <person name="Lucas S."/>
            <person name="Lapidus A."/>
            <person name="Glavina del Rio T."/>
            <person name="Dalin E."/>
            <person name="Tice H."/>
            <person name="Bruce D."/>
            <person name="Goodwin L."/>
            <person name="Pitluck S."/>
            <person name="Kiss H."/>
            <person name="Brettin T."/>
            <person name="Detter J.C."/>
            <person name="Han C."/>
            <person name="Kuske C.R."/>
            <person name="Schmutz J."/>
            <person name="Larimer F."/>
            <person name="Land M."/>
            <person name="Hauser L."/>
            <person name="Kyrpides N."/>
            <person name="Mikhailova N."/>
            <person name="Ingram L."/>
            <person name="Richardson P."/>
        </authorList>
    </citation>
    <scope>NUCLEOTIDE SEQUENCE [LARGE SCALE GENOMIC DNA]</scope>
    <source>
        <strain>ATCC 8739 / DSM 1576 / NBRC 3972 / NCIMB 8545 / WDCM 00012 / Crooks</strain>
    </source>
</reference>
<organism>
    <name type="scientific">Escherichia coli (strain ATCC 8739 / DSM 1576 / NBRC 3972 / NCIMB 8545 / WDCM 00012 / Crooks)</name>
    <dbReference type="NCBI Taxonomy" id="481805"/>
    <lineage>
        <taxon>Bacteria</taxon>
        <taxon>Pseudomonadati</taxon>
        <taxon>Pseudomonadota</taxon>
        <taxon>Gammaproteobacteria</taxon>
        <taxon>Enterobacterales</taxon>
        <taxon>Enterobacteriaceae</taxon>
        <taxon>Escherichia</taxon>
    </lineage>
</organism>
<protein>
    <recommendedName>
        <fullName evidence="1">Large ribosomal subunit protein uL30</fullName>
    </recommendedName>
    <alternativeName>
        <fullName evidence="2">50S ribosomal protein L30</fullName>
    </alternativeName>
</protein>
<feature type="chain" id="PRO_1000087249" description="Large ribosomal subunit protein uL30">
    <location>
        <begin position="1"/>
        <end position="59"/>
    </location>
</feature>
<keyword id="KW-0687">Ribonucleoprotein</keyword>
<keyword id="KW-0689">Ribosomal protein</keyword>
<comment type="subunit">
    <text evidence="1">Part of the 50S ribosomal subunit.</text>
</comment>
<comment type="similarity">
    <text evidence="1">Belongs to the universal ribosomal protein uL30 family.</text>
</comment>
<name>RL30_ECOLC</name>
<sequence length="59" mass="6542">MAKTIKITQTRSAIGRLPKHKATLLGLGLRRIGHTVEREDTPAIRGMINAVSFMVKVEE</sequence>
<accession>B1IPZ7</accession>
<dbReference type="EMBL" id="CP000946">
    <property type="protein sequence ID" value="ACA76089.1"/>
    <property type="molecule type" value="Genomic_DNA"/>
</dbReference>
<dbReference type="RefSeq" id="WP_001140433.1">
    <property type="nucleotide sequence ID" value="NZ_MTFT01000014.1"/>
</dbReference>
<dbReference type="SMR" id="B1IPZ7"/>
<dbReference type="GeneID" id="93778685"/>
<dbReference type="KEGG" id="ecl:EcolC_0411"/>
<dbReference type="HOGENOM" id="CLU_131047_1_4_6"/>
<dbReference type="GO" id="GO:0022625">
    <property type="term" value="C:cytosolic large ribosomal subunit"/>
    <property type="evidence" value="ECO:0007669"/>
    <property type="project" value="TreeGrafter"/>
</dbReference>
<dbReference type="GO" id="GO:0003735">
    <property type="term" value="F:structural constituent of ribosome"/>
    <property type="evidence" value="ECO:0007669"/>
    <property type="project" value="InterPro"/>
</dbReference>
<dbReference type="GO" id="GO:0006412">
    <property type="term" value="P:translation"/>
    <property type="evidence" value="ECO:0007669"/>
    <property type="project" value="UniProtKB-UniRule"/>
</dbReference>
<dbReference type="CDD" id="cd01658">
    <property type="entry name" value="Ribosomal_L30"/>
    <property type="match status" value="1"/>
</dbReference>
<dbReference type="FunFam" id="3.30.1390.20:FF:000001">
    <property type="entry name" value="50S ribosomal protein L30"/>
    <property type="match status" value="1"/>
</dbReference>
<dbReference type="Gene3D" id="3.30.1390.20">
    <property type="entry name" value="Ribosomal protein L30, ferredoxin-like fold domain"/>
    <property type="match status" value="1"/>
</dbReference>
<dbReference type="HAMAP" id="MF_01371_B">
    <property type="entry name" value="Ribosomal_uL30_B"/>
    <property type="match status" value="1"/>
</dbReference>
<dbReference type="InterPro" id="IPR036919">
    <property type="entry name" value="Ribo_uL30_ferredoxin-like_sf"/>
</dbReference>
<dbReference type="InterPro" id="IPR005996">
    <property type="entry name" value="Ribosomal_uL30_bac-type"/>
</dbReference>
<dbReference type="InterPro" id="IPR018038">
    <property type="entry name" value="Ribosomal_uL30_CS"/>
</dbReference>
<dbReference type="InterPro" id="IPR016082">
    <property type="entry name" value="Ribosomal_uL30_ferredoxin-like"/>
</dbReference>
<dbReference type="NCBIfam" id="TIGR01308">
    <property type="entry name" value="rpmD_bact"/>
    <property type="match status" value="1"/>
</dbReference>
<dbReference type="PANTHER" id="PTHR15892:SF2">
    <property type="entry name" value="LARGE RIBOSOMAL SUBUNIT PROTEIN UL30M"/>
    <property type="match status" value="1"/>
</dbReference>
<dbReference type="PANTHER" id="PTHR15892">
    <property type="entry name" value="MITOCHONDRIAL RIBOSOMAL PROTEIN L30"/>
    <property type="match status" value="1"/>
</dbReference>
<dbReference type="Pfam" id="PF00327">
    <property type="entry name" value="Ribosomal_L30"/>
    <property type="match status" value="1"/>
</dbReference>
<dbReference type="PIRSF" id="PIRSF002211">
    <property type="entry name" value="Ribosomal_L30_bac-type"/>
    <property type="match status" value="1"/>
</dbReference>
<dbReference type="SUPFAM" id="SSF55129">
    <property type="entry name" value="Ribosomal protein L30p/L7e"/>
    <property type="match status" value="1"/>
</dbReference>
<dbReference type="PROSITE" id="PS00634">
    <property type="entry name" value="RIBOSOMAL_L30"/>
    <property type="match status" value="1"/>
</dbReference>